<sequence length="254" mass="29506">MASLLKVDQEVKLKVDSFRERITSEAEDLVANFFPKKLLELDSFLKEPILNIHDLTQIHSDMNLPVPDPILLTNSHDGLDGPTYKKRRLDECEEAFQGTKVFVMPNGMLKSNQQLVDIIEKVKPEIRLLIEKCNTVKMWVQLLIPRIEDGNNFGVSIQEETVAELRTVESEAASYLDQISRYYITRAKLVSKIAKYPHVEDYRRTVTEIDEKEYISLRLIISELRNQYVTLHDMILKNIEKIKRPRSSNAETLY</sequence>
<keyword id="KW-0007">Acetylation</keyword>
<keyword id="KW-0053">Apoptosis</keyword>
<keyword id="KW-0131">Cell cycle</keyword>
<keyword id="KW-0963">Cytoplasm</keyword>
<keyword id="KW-0539">Nucleus</keyword>
<keyword id="KW-0597">Phosphoprotein</keyword>
<keyword id="KW-0647">Proteasome</keyword>
<keyword id="KW-1185">Reference proteome</keyword>
<accession>P61290</accession>
<accession>O35563</accession>
<accession>P97373</accession>
<accession>Q12920</accession>
<accession>Q13172</accession>
<accession>Q9BQD9</accession>
<dbReference type="EMBL" id="D87911">
    <property type="protein sequence ID" value="BAA22041.1"/>
    <property type="molecule type" value="mRNA"/>
</dbReference>
<dbReference type="EMBL" id="U60330">
    <property type="protein sequence ID" value="AAC53297.1"/>
    <property type="molecule type" value="mRNA"/>
</dbReference>
<dbReference type="EMBL" id="AB007139">
    <property type="protein sequence ID" value="BAA28838.1"/>
    <property type="molecule type" value="Genomic_DNA"/>
</dbReference>
<dbReference type="EMBL" id="BC015255">
    <property type="protein sequence ID" value="AAH15255.1"/>
    <property type="molecule type" value="mRNA"/>
</dbReference>
<dbReference type="CCDS" id="CCDS25463.1"/>
<dbReference type="RefSeq" id="NP_035322.1">
    <property type="nucleotide sequence ID" value="NM_011192.4"/>
</dbReference>
<dbReference type="SMR" id="P61290"/>
<dbReference type="BioGRID" id="202435">
    <property type="interactions" value="39"/>
</dbReference>
<dbReference type="FunCoup" id="P61290">
    <property type="interactions" value="5196"/>
</dbReference>
<dbReference type="IntAct" id="P61290">
    <property type="interactions" value="3"/>
</dbReference>
<dbReference type="STRING" id="10090.ENSMUSP00000019470"/>
<dbReference type="GlyGen" id="P61290">
    <property type="glycosylation" value="3 sites, 1 O-linked glycan (2 sites)"/>
</dbReference>
<dbReference type="iPTMnet" id="P61290"/>
<dbReference type="PhosphoSitePlus" id="P61290"/>
<dbReference type="REPRODUCTION-2DPAGE" id="P61290"/>
<dbReference type="jPOST" id="P61290"/>
<dbReference type="PaxDb" id="10090-ENSMUSP00000019470"/>
<dbReference type="PeptideAtlas" id="P61290"/>
<dbReference type="ProteomicsDB" id="291705"/>
<dbReference type="Pumba" id="P61290"/>
<dbReference type="TopDownProteomics" id="P61290"/>
<dbReference type="Antibodypedia" id="1736">
    <property type="antibodies" value="333 antibodies from 34 providers"/>
</dbReference>
<dbReference type="DNASU" id="19192"/>
<dbReference type="Ensembl" id="ENSMUST00000019470.14">
    <property type="protein sequence ID" value="ENSMUSP00000019470.8"/>
    <property type="gene ID" value="ENSMUSG00000078652.10"/>
</dbReference>
<dbReference type="GeneID" id="19192"/>
<dbReference type="KEGG" id="mmu:19192"/>
<dbReference type="UCSC" id="uc007lon.1">
    <property type="organism name" value="mouse"/>
</dbReference>
<dbReference type="AGR" id="MGI:1096366"/>
<dbReference type="CTD" id="10197"/>
<dbReference type="MGI" id="MGI:1096366">
    <property type="gene designation" value="Psme3"/>
</dbReference>
<dbReference type="VEuPathDB" id="HostDB:ENSMUSG00000078652"/>
<dbReference type="eggNOG" id="KOG4470">
    <property type="taxonomic scope" value="Eukaryota"/>
</dbReference>
<dbReference type="GeneTree" id="ENSGT00950000183098"/>
<dbReference type="HOGENOM" id="CLU_062515_1_0_1"/>
<dbReference type="InParanoid" id="P61290"/>
<dbReference type="OMA" id="PMFNERN"/>
<dbReference type="OrthoDB" id="6591885at2759"/>
<dbReference type="PhylomeDB" id="P61290"/>
<dbReference type="TreeFam" id="TF106236"/>
<dbReference type="Reactome" id="R-MMU-9907900">
    <property type="pathway name" value="Proteasome assembly"/>
</dbReference>
<dbReference type="BioGRID-ORCS" id="19192">
    <property type="hits" value="11 hits in 77 CRISPR screens"/>
</dbReference>
<dbReference type="ChiTaRS" id="Psme3">
    <property type="organism name" value="mouse"/>
</dbReference>
<dbReference type="PRO" id="PR:P61290"/>
<dbReference type="Proteomes" id="UP000000589">
    <property type="component" value="Chromosome 11"/>
</dbReference>
<dbReference type="RNAct" id="P61290">
    <property type="molecule type" value="protein"/>
</dbReference>
<dbReference type="Bgee" id="ENSMUSG00000078652">
    <property type="expression patterns" value="Expressed in blood and 273 other cell types or tissues"/>
</dbReference>
<dbReference type="ExpressionAtlas" id="P61290">
    <property type="expression patterns" value="baseline and differential"/>
</dbReference>
<dbReference type="GO" id="GO:0036064">
    <property type="term" value="C:ciliary basal body"/>
    <property type="evidence" value="ECO:0007669"/>
    <property type="project" value="Ensembl"/>
</dbReference>
<dbReference type="GO" id="GO:0005829">
    <property type="term" value="C:cytosol"/>
    <property type="evidence" value="ECO:0007669"/>
    <property type="project" value="Ensembl"/>
</dbReference>
<dbReference type="GO" id="GO:0005654">
    <property type="term" value="C:nucleoplasm"/>
    <property type="evidence" value="ECO:0007669"/>
    <property type="project" value="Ensembl"/>
</dbReference>
<dbReference type="GO" id="GO:0008537">
    <property type="term" value="C:proteasome activator complex"/>
    <property type="evidence" value="ECO:0007669"/>
    <property type="project" value="InterPro"/>
</dbReference>
<dbReference type="GO" id="GO:0061133">
    <property type="term" value="F:endopeptidase activator activity"/>
    <property type="evidence" value="ECO:0007669"/>
    <property type="project" value="Ensembl"/>
</dbReference>
<dbReference type="GO" id="GO:0042802">
    <property type="term" value="F:identical protein binding"/>
    <property type="evidence" value="ECO:0007669"/>
    <property type="project" value="Ensembl"/>
</dbReference>
<dbReference type="GO" id="GO:0097371">
    <property type="term" value="F:MDM2/MDM4 family protein binding"/>
    <property type="evidence" value="ECO:0000250"/>
    <property type="project" value="UniProtKB"/>
</dbReference>
<dbReference type="GO" id="GO:0002039">
    <property type="term" value="F:p53 binding"/>
    <property type="evidence" value="ECO:0000250"/>
    <property type="project" value="UniProtKB"/>
</dbReference>
<dbReference type="GO" id="GO:0006915">
    <property type="term" value="P:apoptotic process"/>
    <property type="evidence" value="ECO:0007669"/>
    <property type="project" value="UniProtKB-KW"/>
</dbReference>
<dbReference type="GO" id="GO:2001237">
    <property type="term" value="P:negative regulation of extrinsic apoptotic signaling pathway"/>
    <property type="evidence" value="ECO:0000250"/>
    <property type="project" value="UniProtKB"/>
</dbReference>
<dbReference type="GO" id="GO:0061136">
    <property type="term" value="P:regulation of proteasomal protein catabolic process"/>
    <property type="evidence" value="ECO:0007669"/>
    <property type="project" value="Ensembl"/>
</dbReference>
<dbReference type="FunFam" id="1.20.120.180:FF:000001">
    <property type="entry name" value="Proteasome activator complex subunit 3"/>
    <property type="match status" value="1"/>
</dbReference>
<dbReference type="FunFam" id="1.20.5.120:FF:000001">
    <property type="entry name" value="Proteasome activator complex subunit 3"/>
    <property type="match status" value="1"/>
</dbReference>
<dbReference type="Gene3D" id="1.20.120.180">
    <property type="entry name" value="Proteasome activator pa28, C-terminal domain"/>
    <property type="match status" value="1"/>
</dbReference>
<dbReference type="Gene3D" id="1.20.5.120">
    <property type="entry name" value="Proteasome activator pa28, N-terminal domain"/>
    <property type="match status" value="1"/>
</dbReference>
<dbReference type="InterPro" id="IPR003186">
    <property type="entry name" value="PA28_C"/>
</dbReference>
<dbReference type="InterPro" id="IPR036997">
    <property type="entry name" value="PA28_C_sf"/>
</dbReference>
<dbReference type="InterPro" id="IPR036996">
    <property type="entry name" value="PA28_N_sf"/>
</dbReference>
<dbReference type="InterPro" id="IPR009077">
    <property type="entry name" value="Proteasome_activ_PA28"/>
</dbReference>
<dbReference type="InterPro" id="IPR003185">
    <property type="entry name" value="Proteasome_activ_PA28_N"/>
</dbReference>
<dbReference type="InterPro" id="IPR036252">
    <property type="entry name" value="Proteasome_activ_sf"/>
</dbReference>
<dbReference type="PANTHER" id="PTHR10660:SF4">
    <property type="entry name" value="PROTEASOME ACTIVATOR COMPLEX SUBUNIT 3"/>
    <property type="match status" value="1"/>
</dbReference>
<dbReference type="PANTHER" id="PTHR10660">
    <property type="entry name" value="PROTEASOME REGULATOR PA28"/>
    <property type="match status" value="1"/>
</dbReference>
<dbReference type="Pfam" id="PF02252">
    <property type="entry name" value="PA28_C"/>
    <property type="match status" value="1"/>
</dbReference>
<dbReference type="Pfam" id="PF02251">
    <property type="entry name" value="PA28_N"/>
    <property type="match status" value="1"/>
</dbReference>
<dbReference type="SUPFAM" id="SSF47216">
    <property type="entry name" value="Proteasome activator"/>
    <property type="match status" value="1"/>
</dbReference>
<protein>
    <recommendedName>
        <fullName>Proteasome activator complex subunit 3</fullName>
    </recommendedName>
    <alternativeName>
        <fullName>11S regulator complex subunit gamma</fullName>
        <shortName>REG-gamma</shortName>
    </alternativeName>
    <alternativeName>
        <fullName>Activator of multicatalytic protease subunit 3</fullName>
    </alternativeName>
    <alternativeName>
        <fullName>Ki nuclear autoantigen</fullName>
    </alternativeName>
    <alternativeName>
        <fullName>Proteasome activator 28 subunit gamma</fullName>
        <shortName>PA28g</shortName>
        <shortName>PA28gamma</shortName>
    </alternativeName>
</protein>
<evidence type="ECO:0000250" key="1"/>
<evidence type="ECO:0000250" key="2">
    <source>
        <dbReference type="UniProtKB" id="P61289"/>
    </source>
</evidence>
<evidence type="ECO:0000269" key="3">
    <source>
    </source>
</evidence>
<evidence type="ECO:0000269" key="4">
    <source>
    </source>
</evidence>
<evidence type="ECO:0000305" key="5"/>
<feature type="initiator methionine" description="Removed" evidence="2">
    <location>
        <position position="1"/>
    </location>
</feature>
<feature type="chain" id="PRO_0000161790" description="Proteasome activator complex subunit 3">
    <location>
        <begin position="2"/>
        <end position="254"/>
    </location>
</feature>
<feature type="modified residue" description="N-acetylalanine" evidence="2">
    <location>
        <position position="2"/>
    </location>
</feature>
<feature type="modified residue" description="Phosphoserine" evidence="2">
    <location>
        <position position="17"/>
    </location>
</feature>
<feature type="modified residue" description="Phosphoserine" evidence="2">
    <location>
        <position position="24"/>
    </location>
</feature>
<feature type="modified residue" description="N6-acetyllysine; by P300/CBP" evidence="2">
    <location>
        <position position="195"/>
    </location>
</feature>
<feature type="modified residue" description="Phosphoserine; by CHEK2" evidence="2">
    <location>
        <position position="247"/>
    </location>
</feature>
<feature type="sequence conflict" description="In Ref. 2; AAC53297." evidence="5" ref="2">
    <original>A</original>
    <variation>L</variation>
    <location>
        <position position="2"/>
    </location>
</feature>
<feature type="sequence conflict" description="In Ref. 2; AAC53297." evidence="5" ref="2">
    <original>Q</original>
    <variation>L</variation>
    <location>
        <position position="9"/>
    </location>
</feature>
<feature type="sequence conflict" description="In Ref. 2; AAC53297." evidence="5" ref="2">
    <original>T</original>
    <variation>S</variation>
    <location>
        <position position="23"/>
    </location>
</feature>
<feature type="sequence conflict" description="In Ref. 2; AAC53297." evidence="5" ref="2">
    <original>D</original>
    <variation>G</variation>
    <location>
        <position position="117"/>
    </location>
</feature>
<feature type="sequence conflict" description="In Ref. 2; AAC53297." evidence="5" ref="2">
    <original>A</original>
    <variation>P</variation>
    <location>
        <position position="172"/>
    </location>
</feature>
<feature type="sequence conflict" description="In Ref. 2; AAC53297." evidence="5" ref="2">
    <original>K</original>
    <variation>G</variation>
    <location>
        <position position="188"/>
    </location>
</feature>
<name>PSME3_MOUSE</name>
<comment type="function">
    <text evidence="2">Subunit of the 11S REG-gamma (also called PA28-gamma) proteasome regulator, a doughnut-shaped homoheptamer which associates with the proteasome. 11S REG-gamma activates the trypsin-like catalytic subunit of the proteasome but inhibits the chymotrypsin-like and postglutamyl-preferring (PGPH) subunits. Facilitates the MDM2-p53/TP53 interaction which promotes ubiquitination- and MDM2-dependent proteasomal degradation of p53/TP53, limiting its accumulation and resulting in inhibited apoptosis after DNA damage. May also be involved in cell cycle regulation. Mediates CCAR2 and CHEK2-dependent SIRT1 inhibition (By similarity).</text>
</comment>
<comment type="subunit">
    <text evidence="2 4">Homoheptamer; the stability of the heptamer is essential for the specific activation of the trypsine-like subunit and inhibition of the chymotrypsin-like and postglutamyl-preferring (PGPH) subunits of the proteasome (By similarity). Interacts with p53/TP53 and MDM2 (By similarity). Interacts with MAP3K3 (PubMed:12650640). Associates with the proteasome (By similarity). Interacts with CCAR2 (By similarity). Interacts with PSME3IP1 (via C-terminus); the interaction is direct and promotes the association of PSME3 with the 20S proteasome (By similarity). Interacts with COIL; the interaction is inhibited by PSME3IP1 (By similarity).</text>
</comment>
<comment type="subcellular location">
    <subcellularLocation>
        <location evidence="4">Nucleus</location>
    </subcellularLocation>
    <subcellularLocation>
        <location evidence="4">Cytoplasm</location>
    </subcellularLocation>
    <text>Localizes to the cytoplasm during mitosis following nuclear envelope breakdown at this distinct stage of the cell cycle which allows its interaction with MAP3K3 kinase.</text>
</comment>
<comment type="domain">
    <text evidence="1">The C-terminal sequences affect heptamer stability and proteasome affinity.</text>
</comment>
<comment type="PTM">
    <text evidence="2 4">Phosphorylated by MAP3K3. Phosphorylation at Ser-247 promotes its association with CCAR2 (By similarity).</text>
</comment>
<comment type="PTM">
    <text evidence="1">Acetylation at the major site Lys-195 is important for oligomerization and ability to degrade its target substrates. Deacetylated by SIRT1 (By similarity).</text>
</comment>
<comment type="disruption phenotype">
    <text evidence="3">Growth retardation, small body size, and reduces significantly the percentage of cells that enter the S phase.</text>
</comment>
<comment type="similarity">
    <text evidence="5">Belongs to the PA28 family.</text>
</comment>
<proteinExistence type="evidence at protein level"/>
<organism>
    <name type="scientific">Mus musculus</name>
    <name type="common">Mouse</name>
    <dbReference type="NCBI Taxonomy" id="10090"/>
    <lineage>
        <taxon>Eukaryota</taxon>
        <taxon>Metazoa</taxon>
        <taxon>Chordata</taxon>
        <taxon>Craniata</taxon>
        <taxon>Vertebrata</taxon>
        <taxon>Euteleostomi</taxon>
        <taxon>Mammalia</taxon>
        <taxon>Eutheria</taxon>
        <taxon>Euarchontoglires</taxon>
        <taxon>Glires</taxon>
        <taxon>Rodentia</taxon>
        <taxon>Myomorpha</taxon>
        <taxon>Muroidea</taxon>
        <taxon>Muridae</taxon>
        <taxon>Murinae</taxon>
        <taxon>Mus</taxon>
        <taxon>Mus</taxon>
    </lineage>
</organism>
<reference key="1">
    <citation type="journal article" date="1997" name="Immunogenetics">
        <title>PA28 subunits of the mouse proteasome: primary structures and chromosomal localization of the genes.</title>
        <authorList>
            <person name="Kandil E."/>
            <person name="Kohda K."/>
            <person name="Ishibashi T."/>
            <person name="Tanaka K."/>
            <person name="Kasahara M."/>
        </authorList>
    </citation>
    <scope>NUCLEOTIDE SEQUENCE [MRNA]</scope>
    <source>
        <strain>C57BL/6J</strain>
        <tissue>Spleen</tissue>
    </source>
</reference>
<reference key="2">
    <citation type="journal article" date="1997" name="Immunogenetics">
        <title>Sequence and expression of mouse proteasome activator PA28 and the related autoantigen Ki.</title>
        <authorList>
            <person name="Jiang H."/>
            <person name="Monaco J.J."/>
        </authorList>
    </citation>
    <scope>NUCLEOTIDE SEQUENCE [MRNA]</scope>
    <source>
        <strain>B10.BR</strain>
    </source>
</reference>
<reference key="3">
    <citation type="journal article" date="1998" name="J. Immunol.">
        <title>Characterization of the mouse PA28 activator complex gene family: complete organizations of the three member genes and a physical map of the approximately 150-kb region containing the alpha- and beta-subunit genes.</title>
        <authorList>
            <person name="Kohda K."/>
            <person name="Ishibashi T."/>
            <person name="Shimbara N."/>
            <person name="Tanaka K."/>
            <person name="Matsuda Y."/>
            <person name="Kasahara M."/>
        </authorList>
    </citation>
    <scope>NUCLEOTIDE SEQUENCE [GENOMIC DNA]</scope>
    <source>
        <strain>129/SvJ</strain>
    </source>
</reference>
<reference key="4">
    <citation type="journal article" date="2004" name="Genome Res.">
        <title>The status, quality, and expansion of the NIH full-length cDNA project: the Mammalian Gene Collection (MGC).</title>
        <authorList>
            <consortium name="The MGC Project Team"/>
        </authorList>
    </citation>
    <scope>NUCLEOTIDE SEQUENCE [LARGE SCALE MRNA]</scope>
    <source>
        <strain>FVB/N</strain>
        <tissue>Kidney</tissue>
    </source>
</reference>
<reference key="5">
    <citation type="journal article" date="1999" name="J. Biol. Chem.">
        <title>Growth retardation in mice lacking the proteasome activator PA28gamma.</title>
        <authorList>
            <person name="Murata S."/>
            <person name="Kawahara H."/>
            <person name="Tohma S."/>
            <person name="Yamamoto K."/>
            <person name="Kasahara M."/>
            <person name="Nabeshima Y."/>
            <person name="Tanaka K."/>
            <person name="Chiba T."/>
        </authorList>
    </citation>
    <scope>DISRUPTION PHENOTYPE</scope>
</reference>
<reference key="6">
    <citation type="journal article" date="2003" name="Biochem. J.">
        <title>MEKK3 interacts with the PA28 gamma regulatory subunit of the proteasome.</title>
        <authorList>
            <person name="Hagemann C."/>
            <person name="Patel R."/>
            <person name="Blank J.L."/>
        </authorList>
    </citation>
    <scope>INTERACTION WITH MAP3K3</scope>
    <scope>PHOSPHORYLATION BY MAP3K3</scope>
    <scope>SUBCELLULAR LOCATION</scope>
</reference>
<reference key="7">
    <citation type="journal article" date="2010" name="Cell">
        <title>A tissue-specific atlas of mouse protein phosphorylation and expression.</title>
        <authorList>
            <person name="Huttlin E.L."/>
            <person name="Jedrychowski M.P."/>
            <person name="Elias J.E."/>
            <person name="Goswami T."/>
            <person name="Rad R."/>
            <person name="Beausoleil S.A."/>
            <person name="Villen J."/>
            <person name="Haas W."/>
            <person name="Sowa M.E."/>
            <person name="Gygi S.P."/>
        </authorList>
    </citation>
    <scope>IDENTIFICATION BY MASS SPECTROMETRY [LARGE SCALE ANALYSIS]</scope>
    <source>
        <tissue>Brain</tissue>
        <tissue>Brown adipose tissue</tissue>
        <tissue>Heart</tissue>
        <tissue>Kidney</tissue>
        <tissue>Liver</tissue>
        <tissue>Lung</tissue>
        <tissue>Pancreas</tissue>
        <tissue>Spleen</tissue>
        <tissue>Testis</tissue>
    </source>
</reference>
<gene>
    <name type="primary">Psme3</name>
</gene>